<reference key="1">
    <citation type="journal article" date="2009" name="PLoS Genet.">
        <title>Organised genome dynamics in the Escherichia coli species results in highly diverse adaptive paths.</title>
        <authorList>
            <person name="Touchon M."/>
            <person name="Hoede C."/>
            <person name="Tenaillon O."/>
            <person name="Barbe V."/>
            <person name="Baeriswyl S."/>
            <person name="Bidet P."/>
            <person name="Bingen E."/>
            <person name="Bonacorsi S."/>
            <person name="Bouchier C."/>
            <person name="Bouvet O."/>
            <person name="Calteau A."/>
            <person name="Chiapello H."/>
            <person name="Clermont O."/>
            <person name="Cruveiller S."/>
            <person name="Danchin A."/>
            <person name="Diard M."/>
            <person name="Dossat C."/>
            <person name="Karoui M.E."/>
            <person name="Frapy E."/>
            <person name="Garry L."/>
            <person name="Ghigo J.M."/>
            <person name="Gilles A.M."/>
            <person name="Johnson J."/>
            <person name="Le Bouguenec C."/>
            <person name="Lescat M."/>
            <person name="Mangenot S."/>
            <person name="Martinez-Jehanne V."/>
            <person name="Matic I."/>
            <person name="Nassif X."/>
            <person name="Oztas S."/>
            <person name="Petit M.A."/>
            <person name="Pichon C."/>
            <person name="Rouy Z."/>
            <person name="Ruf C.S."/>
            <person name="Schneider D."/>
            <person name="Tourret J."/>
            <person name="Vacherie B."/>
            <person name="Vallenet D."/>
            <person name="Medigue C."/>
            <person name="Rocha E.P.C."/>
            <person name="Denamur E."/>
        </authorList>
    </citation>
    <scope>NUCLEOTIDE SEQUENCE [LARGE SCALE GENOMIC DNA]</scope>
    <source>
        <strain>ED1a</strain>
    </source>
</reference>
<proteinExistence type="inferred from homology"/>
<organism>
    <name type="scientific">Escherichia coli O81 (strain ED1a)</name>
    <dbReference type="NCBI Taxonomy" id="585397"/>
    <lineage>
        <taxon>Bacteria</taxon>
        <taxon>Pseudomonadati</taxon>
        <taxon>Pseudomonadota</taxon>
        <taxon>Gammaproteobacteria</taxon>
        <taxon>Enterobacterales</taxon>
        <taxon>Enterobacteriaceae</taxon>
        <taxon>Escherichia</taxon>
    </lineage>
</organism>
<keyword id="KW-0068">Autocatalytic cleavage</keyword>
<keyword id="KW-0227">DNA damage</keyword>
<keyword id="KW-0234">DNA repair</keyword>
<keyword id="KW-0235">DNA replication</keyword>
<keyword id="KW-0238">DNA-binding</keyword>
<keyword id="KW-0378">Hydrolase</keyword>
<keyword id="KW-0678">Repressor</keyword>
<keyword id="KW-0742">SOS response</keyword>
<keyword id="KW-0804">Transcription</keyword>
<keyword id="KW-0805">Transcription regulation</keyword>
<dbReference type="EC" id="3.4.21.88" evidence="1"/>
<dbReference type="EMBL" id="CU928162">
    <property type="protein sequence ID" value="CAR10719.1"/>
    <property type="molecule type" value="Genomic_DNA"/>
</dbReference>
<dbReference type="RefSeq" id="WP_000646078.1">
    <property type="nucleotide sequence ID" value="NC_011745.1"/>
</dbReference>
<dbReference type="SMR" id="B7N2Q0"/>
<dbReference type="MEROPS" id="S24.001"/>
<dbReference type="GeneID" id="93777788"/>
<dbReference type="KEGG" id="ecq:ECED1_4759"/>
<dbReference type="HOGENOM" id="CLU_066192_45_3_6"/>
<dbReference type="Proteomes" id="UP000000748">
    <property type="component" value="Chromosome"/>
</dbReference>
<dbReference type="GO" id="GO:0003677">
    <property type="term" value="F:DNA binding"/>
    <property type="evidence" value="ECO:0007669"/>
    <property type="project" value="UniProtKB-UniRule"/>
</dbReference>
<dbReference type="GO" id="GO:0004252">
    <property type="term" value="F:serine-type endopeptidase activity"/>
    <property type="evidence" value="ECO:0007669"/>
    <property type="project" value="UniProtKB-UniRule"/>
</dbReference>
<dbReference type="GO" id="GO:0006281">
    <property type="term" value="P:DNA repair"/>
    <property type="evidence" value="ECO:0007669"/>
    <property type="project" value="UniProtKB-UniRule"/>
</dbReference>
<dbReference type="GO" id="GO:0006260">
    <property type="term" value="P:DNA replication"/>
    <property type="evidence" value="ECO:0007669"/>
    <property type="project" value="UniProtKB-UniRule"/>
</dbReference>
<dbReference type="GO" id="GO:0045892">
    <property type="term" value="P:negative regulation of DNA-templated transcription"/>
    <property type="evidence" value="ECO:0007669"/>
    <property type="project" value="UniProtKB-UniRule"/>
</dbReference>
<dbReference type="GO" id="GO:0006508">
    <property type="term" value="P:proteolysis"/>
    <property type="evidence" value="ECO:0007669"/>
    <property type="project" value="InterPro"/>
</dbReference>
<dbReference type="GO" id="GO:0009432">
    <property type="term" value="P:SOS response"/>
    <property type="evidence" value="ECO:0007669"/>
    <property type="project" value="UniProtKB-UniRule"/>
</dbReference>
<dbReference type="CDD" id="cd06529">
    <property type="entry name" value="S24_LexA-like"/>
    <property type="match status" value="1"/>
</dbReference>
<dbReference type="FunFam" id="1.10.10.10:FF:000009">
    <property type="entry name" value="LexA repressor"/>
    <property type="match status" value="1"/>
</dbReference>
<dbReference type="FunFam" id="2.10.109.10:FF:000001">
    <property type="entry name" value="LexA repressor"/>
    <property type="match status" value="1"/>
</dbReference>
<dbReference type="Gene3D" id="2.10.109.10">
    <property type="entry name" value="Umud Fragment, subunit A"/>
    <property type="match status" value="1"/>
</dbReference>
<dbReference type="Gene3D" id="1.10.10.10">
    <property type="entry name" value="Winged helix-like DNA-binding domain superfamily/Winged helix DNA-binding domain"/>
    <property type="match status" value="1"/>
</dbReference>
<dbReference type="HAMAP" id="MF_00015">
    <property type="entry name" value="LexA"/>
    <property type="match status" value="1"/>
</dbReference>
<dbReference type="InterPro" id="IPR006200">
    <property type="entry name" value="LexA"/>
</dbReference>
<dbReference type="InterPro" id="IPR039418">
    <property type="entry name" value="LexA-like"/>
</dbReference>
<dbReference type="InterPro" id="IPR036286">
    <property type="entry name" value="LexA/Signal_pep-like_sf"/>
</dbReference>
<dbReference type="InterPro" id="IPR006199">
    <property type="entry name" value="LexA_DNA-bd_dom"/>
</dbReference>
<dbReference type="InterPro" id="IPR050077">
    <property type="entry name" value="LexA_repressor"/>
</dbReference>
<dbReference type="InterPro" id="IPR006197">
    <property type="entry name" value="Peptidase_S24_LexA"/>
</dbReference>
<dbReference type="InterPro" id="IPR015927">
    <property type="entry name" value="Peptidase_S24_S26A/B/C"/>
</dbReference>
<dbReference type="InterPro" id="IPR036388">
    <property type="entry name" value="WH-like_DNA-bd_sf"/>
</dbReference>
<dbReference type="InterPro" id="IPR036390">
    <property type="entry name" value="WH_DNA-bd_sf"/>
</dbReference>
<dbReference type="NCBIfam" id="TIGR00498">
    <property type="entry name" value="lexA"/>
    <property type="match status" value="1"/>
</dbReference>
<dbReference type="PANTHER" id="PTHR33516">
    <property type="entry name" value="LEXA REPRESSOR"/>
    <property type="match status" value="1"/>
</dbReference>
<dbReference type="PANTHER" id="PTHR33516:SF2">
    <property type="entry name" value="LEXA REPRESSOR-RELATED"/>
    <property type="match status" value="1"/>
</dbReference>
<dbReference type="Pfam" id="PF01726">
    <property type="entry name" value="LexA_DNA_bind"/>
    <property type="match status" value="1"/>
</dbReference>
<dbReference type="Pfam" id="PF00717">
    <property type="entry name" value="Peptidase_S24"/>
    <property type="match status" value="1"/>
</dbReference>
<dbReference type="PRINTS" id="PR00726">
    <property type="entry name" value="LEXASERPTASE"/>
</dbReference>
<dbReference type="SUPFAM" id="SSF51306">
    <property type="entry name" value="LexA/Signal peptidase"/>
    <property type="match status" value="1"/>
</dbReference>
<dbReference type="SUPFAM" id="SSF46785">
    <property type="entry name" value="Winged helix' DNA-binding domain"/>
    <property type="match status" value="1"/>
</dbReference>
<accession>B7N2Q0</accession>
<protein>
    <recommendedName>
        <fullName evidence="1">LexA repressor</fullName>
        <ecNumber evidence="1">3.4.21.88</ecNumber>
    </recommendedName>
</protein>
<comment type="function">
    <text evidence="1">Represses a number of genes involved in the response to DNA damage (SOS response), including recA and lexA. Binds to the 16 bp palindromic sequence 5'-CTGTATATATATACAG-3'. In the presence of single-stranded DNA, RecA interacts with LexA causing an autocatalytic cleavage which disrupts the DNA-binding part of LexA, leading to derepression of the SOS regulon and eventually DNA repair.</text>
</comment>
<comment type="catalytic activity">
    <reaction evidence="1">
        <text>Hydrolysis of Ala-|-Gly bond in repressor LexA.</text>
        <dbReference type="EC" id="3.4.21.88"/>
    </reaction>
</comment>
<comment type="subunit">
    <text evidence="1">Homodimer.</text>
</comment>
<comment type="similarity">
    <text evidence="1">Belongs to the peptidase S24 family.</text>
</comment>
<gene>
    <name evidence="1" type="primary">lexA</name>
    <name type="ordered locus">ECED1_4759</name>
</gene>
<sequence>MKALTARQQEVFDLIRDHISQTGMPPTRAEIAQRLGFRSPNAAEEHLKALARKGVIEIVSGASRGIRLLQEEEEGLPLVGRVAAGEPLLAQQHIEGHYQVDPSLFKPNADFLLRVSGMSMKDIGIMDGDLLAVHKTQDVRNGQVVVARIDDEVTVKRLKKQGNKVELLPENSEFKPIVVDLRQQSFTIEGLAVGVIRNGDWL</sequence>
<feature type="chain" id="PRO_1000116606" description="LexA repressor">
    <location>
        <begin position="1"/>
        <end position="202"/>
    </location>
</feature>
<feature type="DNA-binding region" description="H-T-H motif" evidence="1">
    <location>
        <begin position="28"/>
        <end position="48"/>
    </location>
</feature>
<feature type="active site" description="For autocatalytic cleavage activity" evidence="1">
    <location>
        <position position="119"/>
    </location>
</feature>
<feature type="active site" description="For autocatalytic cleavage activity" evidence="1">
    <location>
        <position position="156"/>
    </location>
</feature>
<feature type="site" description="Cleavage; by autolysis" evidence="1">
    <location>
        <begin position="84"/>
        <end position="85"/>
    </location>
</feature>
<evidence type="ECO:0000255" key="1">
    <source>
        <dbReference type="HAMAP-Rule" id="MF_00015"/>
    </source>
</evidence>
<name>LEXA_ECO81</name>